<reference key="1">
    <citation type="journal article" date="2004" name="Proc. Natl. Acad. Sci. U.S.A.">
        <title>The complete genomic sequence of Nocardia farcinica IFM 10152.</title>
        <authorList>
            <person name="Ishikawa J."/>
            <person name="Yamashita A."/>
            <person name="Mikami Y."/>
            <person name="Hoshino Y."/>
            <person name="Kurita H."/>
            <person name="Hotta K."/>
            <person name="Shiba T."/>
            <person name="Hattori M."/>
        </authorList>
    </citation>
    <scope>NUCLEOTIDE SEQUENCE [LARGE SCALE GENOMIC DNA]</scope>
    <source>
        <strain>IFM 10152</strain>
    </source>
</reference>
<evidence type="ECO:0000255" key="1">
    <source>
        <dbReference type="HAMAP-Rule" id="MF_00456"/>
    </source>
</evidence>
<name>PROB_NOCFA</name>
<keyword id="KW-0028">Amino-acid biosynthesis</keyword>
<keyword id="KW-0067">ATP-binding</keyword>
<keyword id="KW-0963">Cytoplasm</keyword>
<keyword id="KW-0418">Kinase</keyword>
<keyword id="KW-0547">Nucleotide-binding</keyword>
<keyword id="KW-0641">Proline biosynthesis</keyword>
<keyword id="KW-1185">Reference proteome</keyword>
<keyword id="KW-0808">Transferase</keyword>
<gene>
    <name evidence="1" type="primary">proB</name>
    <name type="ordered locus">NFA_13560</name>
</gene>
<dbReference type="EC" id="2.7.2.11" evidence="1"/>
<dbReference type="EMBL" id="AP006618">
    <property type="protein sequence ID" value="BAD56201.1"/>
    <property type="molecule type" value="Genomic_DNA"/>
</dbReference>
<dbReference type="RefSeq" id="WP_011207886.1">
    <property type="nucleotide sequence ID" value="NC_006361.1"/>
</dbReference>
<dbReference type="SMR" id="Q5Z040"/>
<dbReference type="STRING" id="247156.NFA_13560"/>
<dbReference type="GeneID" id="61132178"/>
<dbReference type="KEGG" id="nfa:NFA_13560"/>
<dbReference type="eggNOG" id="COG0263">
    <property type="taxonomic scope" value="Bacteria"/>
</dbReference>
<dbReference type="HOGENOM" id="CLU_025400_2_0_11"/>
<dbReference type="OrthoDB" id="9804434at2"/>
<dbReference type="UniPathway" id="UPA00098">
    <property type="reaction ID" value="UER00359"/>
</dbReference>
<dbReference type="Proteomes" id="UP000006820">
    <property type="component" value="Chromosome"/>
</dbReference>
<dbReference type="GO" id="GO:0005829">
    <property type="term" value="C:cytosol"/>
    <property type="evidence" value="ECO:0007669"/>
    <property type="project" value="TreeGrafter"/>
</dbReference>
<dbReference type="GO" id="GO:0005524">
    <property type="term" value="F:ATP binding"/>
    <property type="evidence" value="ECO:0007669"/>
    <property type="project" value="UniProtKB-KW"/>
</dbReference>
<dbReference type="GO" id="GO:0004349">
    <property type="term" value="F:glutamate 5-kinase activity"/>
    <property type="evidence" value="ECO:0007669"/>
    <property type="project" value="UniProtKB-UniRule"/>
</dbReference>
<dbReference type="GO" id="GO:0003723">
    <property type="term" value="F:RNA binding"/>
    <property type="evidence" value="ECO:0007669"/>
    <property type="project" value="InterPro"/>
</dbReference>
<dbReference type="GO" id="GO:0055129">
    <property type="term" value="P:L-proline biosynthetic process"/>
    <property type="evidence" value="ECO:0007669"/>
    <property type="project" value="UniProtKB-UniRule"/>
</dbReference>
<dbReference type="CDD" id="cd04242">
    <property type="entry name" value="AAK_G5K_ProB"/>
    <property type="match status" value="1"/>
</dbReference>
<dbReference type="CDD" id="cd21157">
    <property type="entry name" value="PUA_G5K"/>
    <property type="match status" value="1"/>
</dbReference>
<dbReference type="FunFam" id="3.40.1160.10:FF:000018">
    <property type="entry name" value="Glutamate 5-kinase"/>
    <property type="match status" value="1"/>
</dbReference>
<dbReference type="Gene3D" id="3.40.1160.10">
    <property type="entry name" value="Acetylglutamate kinase-like"/>
    <property type="match status" value="1"/>
</dbReference>
<dbReference type="Gene3D" id="2.30.130.10">
    <property type="entry name" value="PUA domain"/>
    <property type="match status" value="1"/>
</dbReference>
<dbReference type="HAMAP" id="MF_00456">
    <property type="entry name" value="ProB"/>
    <property type="match status" value="1"/>
</dbReference>
<dbReference type="InterPro" id="IPR036393">
    <property type="entry name" value="AceGlu_kinase-like_sf"/>
</dbReference>
<dbReference type="InterPro" id="IPR001048">
    <property type="entry name" value="Asp/Glu/Uridylate_kinase"/>
</dbReference>
<dbReference type="InterPro" id="IPR041739">
    <property type="entry name" value="G5K_ProB"/>
</dbReference>
<dbReference type="InterPro" id="IPR001057">
    <property type="entry name" value="Glu/AcGlu_kinase"/>
</dbReference>
<dbReference type="InterPro" id="IPR011529">
    <property type="entry name" value="Glu_5kinase"/>
</dbReference>
<dbReference type="InterPro" id="IPR005715">
    <property type="entry name" value="Glu_5kinase/COase_Synthase"/>
</dbReference>
<dbReference type="InterPro" id="IPR019797">
    <property type="entry name" value="Glutamate_5-kinase_CS"/>
</dbReference>
<dbReference type="InterPro" id="IPR002478">
    <property type="entry name" value="PUA"/>
</dbReference>
<dbReference type="InterPro" id="IPR015947">
    <property type="entry name" value="PUA-like_sf"/>
</dbReference>
<dbReference type="InterPro" id="IPR036974">
    <property type="entry name" value="PUA_sf"/>
</dbReference>
<dbReference type="NCBIfam" id="TIGR01027">
    <property type="entry name" value="proB"/>
    <property type="match status" value="1"/>
</dbReference>
<dbReference type="PANTHER" id="PTHR43654">
    <property type="entry name" value="GLUTAMATE 5-KINASE"/>
    <property type="match status" value="1"/>
</dbReference>
<dbReference type="PANTHER" id="PTHR43654:SF1">
    <property type="entry name" value="ISOPENTENYL PHOSPHATE KINASE"/>
    <property type="match status" value="1"/>
</dbReference>
<dbReference type="Pfam" id="PF00696">
    <property type="entry name" value="AA_kinase"/>
    <property type="match status" value="1"/>
</dbReference>
<dbReference type="Pfam" id="PF01472">
    <property type="entry name" value="PUA"/>
    <property type="match status" value="1"/>
</dbReference>
<dbReference type="PIRSF" id="PIRSF000729">
    <property type="entry name" value="GK"/>
    <property type="match status" value="1"/>
</dbReference>
<dbReference type="PRINTS" id="PR00474">
    <property type="entry name" value="GLU5KINASE"/>
</dbReference>
<dbReference type="SMART" id="SM00359">
    <property type="entry name" value="PUA"/>
    <property type="match status" value="1"/>
</dbReference>
<dbReference type="SUPFAM" id="SSF53633">
    <property type="entry name" value="Carbamate kinase-like"/>
    <property type="match status" value="1"/>
</dbReference>
<dbReference type="SUPFAM" id="SSF88697">
    <property type="entry name" value="PUA domain-like"/>
    <property type="match status" value="1"/>
</dbReference>
<dbReference type="PROSITE" id="PS00902">
    <property type="entry name" value="GLUTAMATE_5_KINASE"/>
    <property type="match status" value="1"/>
</dbReference>
<dbReference type="PROSITE" id="PS50890">
    <property type="entry name" value="PUA"/>
    <property type="match status" value="1"/>
</dbReference>
<feature type="chain" id="PRO_0000109700" description="Glutamate 5-kinase">
    <location>
        <begin position="1"/>
        <end position="366"/>
    </location>
</feature>
<feature type="domain" description="PUA" evidence="1">
    <location>
        <begin position="278"/>
        <end position="352"/>
    </location>
</feature>
<feature type="binding site" evidence="1">
    <location>
        <position position="17"/>
    </location>
    <ligand>
        <name>ATP</name>
        <dbReference type="ChEBI" id="CHEBI:30616"/>
    </ligand>
</feature>
<feature type="binding site" evidence="1">
    <location>
        <position position="57"/>
    </location>
    <ligand>
        <name>substrate</name>
    </ligand>
</feature>
<feature type="binding site" evidence="1">
    <location>
        <position position="144"/>
    </location>
    <ligand>
        <name>substrate</name>
    </ligand>
</feature>
<feature type="binding site" evidence="1">
    <location>
        <position position="156"/>
    </location>
    <ligand>
        <name>substrate</name>
    </ligand>
</feature>
<feature type="binding site" evidence="1">
    <location>
        <begin position="176"/>
        <end position="177"/>
    </location>
    <ligand>
        <name>ATP</name>
        <dbReference type="ChEBI" id="CHEBI:30616"/>
    </ligand>
</feature>
<feature type="binding site" evidence="1">
    <location>
        <begin position="216"/>
        <end position="222"/>
    </location>
    <ligand>
        <name>ATP</name>
        <dbReference type="ChEBI" id="CHEBI:30616"/>
    </ligand>
</feature>
<comment type="function">
    <text evidence="1">Catalyzes the transfer of a phosphate group to glutamate to form L-glutamate 5-phosphate.</text>
</comment>
<comment type="catalytic activity">
    <reaction evidence="1">
        <text>L-glutamate + ATP = L-glutamyl 5-phosphate + ADP</text>
        <dbReference type="Rhea" id="RHEA:14877"/>
        <dbReference type="ChEBI" id="CHEBI:29985"/>
        <dbReference type="ChEBI" id="CHEBI:30616"/>
        <dbReference type="ChEBI" id="CHEBI:58274"/>
        <dbReference type="ChEBI" id="CHEBI:456216"/>
        <dbReference type="EC" id="2.7.2.11"/>
    </reaction>
</comment>
<comment type="pathway">
    <text evidence="1">Amino-acid biosynthesis; L-proline biosynthesis; L-glutamate 5-semialdehyde from L-glutamate: step 1/2.</text>
</comment>
<comment type="subcellular location">
    <subcellularLocation>
        <location evidence="1">Cytoplasm</location>
    </subcellularLocation>
</comment>
<comment type="similarity">
    <text evidence="1">Belongs to the glutamate 5-kinase family.</text>
</comment>
<accession>Q5Z040</accession>
<organism>
    <name type="scientific">Nocardia farcinica (strain IFM 10152)</name>
    <dbReference type="NCBI Taxonomy" id="247156"/>
    <lineage>
        <taxon>Bacteria</taxon>
        <taxon>Bacillati</taxon>
        <taxon>Actinomycetota</taxon>
        <taxon>Actinomycetes</taxon>
        <taxon>Mycobacteriales</taxon>
        <taxon>Nocardiaceae</taxon>
        <taxon>Nocardia</taxon>
    </lineage>
</organism>
<protein>
    <recommendedName>
        <fullName evidence="1">Glutamate 5-kinase</fullName>
        <ecNumber evidence="1">2.7.2.11</ecNumber>
    </recommendedName>
    <alternativeName>
        <fullName evidence="1">Gamma-glutamyl kinase</fullName>
        <shortName evidence="1">GK</shortName>
    </alternativeName>
</protein>
<proteinExistence type="inferred from homology"/>
<sequence>MSAARQAIASARSVVVKIGSSALTSLEGGLDTTRLDRLADAVEARMRAGSDVVVVSSGAIGAGLAPLGLSRRPRDLATKQAAASVGQLALAHAWGTSFARYGRTVGQVLLSADDFSRREHHRNAQRTLDRLRSLGAVAVVNENDTVATEEIRFGDNDRLAALVAHLVGADALILLSDVEGLYDGDPRKGAATFIPEVRSSADLDGVIAGSGGVLGTGGMASKLSAARLAADAGVPVLLAAAEQAATALGSGTVGTAFAARPVRLSARKFWVRHAADSRGALVLDDGAVQAVAQRRRSLLAAGITAVRGRFHGGDVVDLLAADQRLVARGVVEYDSTELSTMLGRSTTELPDTMQRPVIHADDLVKV</sequence>